<comment type="function">
    <text evidence="2">With S4 and S5 plays an important role in translational accuracy.</text>
</comment>
<comment type="function">
    <text evidence="2">Interacts with and stabilizes bases of the 16S rRNA that are involved in tRNA selection in the A site and with the mRNA backbone. Located at the interface of the 30S and 50S subunits, it traverses the body of the 30S subunit contacting proteins on the other side and probably holding the rRNA structure together. The combined cluster of proteins S8, S12 and S17 appears to hold together the shoulder and platform of the 30S subunit.</text>
</comment>
<comment type="subunit">
    <text evidence="2">Part of the 30S ribosomal subunit. Contacts proteins S8 and S17. May interact with IF1 in the 30S initiation complex.</text>
</comment>
<comment type="similarity">
    <text evidence="2">Belongs to the universal ribosomal protein uS12 family.</text>
</comment>
<organism>
    <name type="scientific">Aster yellows witches'-broom phytoplasma (strain AYWB)</name>
    <dbReference type="NCBI Taxonomy" id="322098"/>
    <lineage>
        <taxon>Bacteria</taxon>
        <taxon>Bacillati</taxon>
        <taxon>Mycoplasmatota</taxon>
        <taxon>Mollicutes</taxon>
        <taxon>Acholeplasmatales</taxon>
        <taxon>Acholeplasmataceae</taxon>
        <taxon>Candidatus Phytoplasma</taxon>
        <taxon>16SrI (Aster yellows group)</taxon>
    </lineage>
</organism>
<accession>Q2NJ17</accession>
<evidence type="ECO:0000250" key="1"/>
<evidence type="ECO:0000255" key="2">
    <source>
        <dbReference type="HAMAP-Rule" id="MF_00403"/>
    </source>
</evidence>
<evidence type="ECO:0000256" key="3">
    <source>
        <dbReference type="SAM" id="MobiDB-lite"/>
    </source>
</evidence>
<evidence type="ECO:0000305" key="4"/>
<dbReference type="EMBL" id="CP000061">
    <property type="protein sequence ID" value="ABC65576.1"/>
    <property type="molecule type" value="Genomic_DNA"/>
</dbReference>
<dbReference type="RefSeq" id="WP_011412740.1">
    <property type="nucleotide sequence ID" value="NC_007716.1"/>
</dbReference>
<dbReference type="SMR" id="Q2NJ17"/>
<dbReference type="STRING" id="322098.AYWB_459"/>
<dbReference type="KEGG" id="ayw:AYWB_459"/>
<dbReference type="eggNOG" id="COG0048">
    <property type="taxonomic scope" value="Bacteria"/>
</dbReference>
<dbReference type="HOGENOM" id="CLU_104295_1_2_14"/>
<dbReference type="OrthoDB" id="9802366at2"/>
<dbReference type="PhylomeDB" id="Q2NJ17"/>
<dbReference type="Proteomes" id="UP000001934">
    <property type="component" value="Chromosome"/>
</dbReference>
<dbReference type="GO" id="GO:0015935">
    <property type="term" value="C:small ribosomal subunit"/>
    <property type="evidence" value="ECO:0007669"/>
    <property type="project" value="InterPro"/>
</dbReference>
<dbReference type="GO" id="GO:0019843">
    <property type="term" value="F:rRNA binding"/>
    <property type="evidence" value="ECO:0007669"/>
    <property type="project" value="UniProtKB-UniRule"/>
</dbReference>
<dbReference type="GO" id="GO:0003735">
    <property type="term" value="F:structural constituent of ribosome"/>
    <property type="evidence" value="ECO:0007669"/>
    <property type="project" value="InterPro"/>
</dbReference>
<dbReference type="GO" id="GO:0000049">
    <property type="term" value="F:tRNA binding"/>
    <property type="evidence" value="ECO:0007669"/>
    <property type="project" value="UniProtKB-UniRule"/>
</dbReference>
<dbReference type="GO" id="GO:0006412">
    <property type="term" value="P:translation"/>
    <property type="evidence" value="ECO:0007669"/>
    <property type="project" value="UniProtKB-UniRule"/>
</dbReference>
<dbReference type="CDD" id="cd03368">
    <property type="entry name" value="Ribosomal_S12"/>
    <property type="match status" value="1"/>
</dbReference>
<dbReference type="FunFam" id="2.40.50.140:FF:000099">
    <property type="entry name" value="Ribosomal protein S12, mitochondrial"/>
    <property type="match status" value="1"/>
</dbReference>
<dbReference type="Gene3D" id="2.40.50.140">
    <property type="entry name" value="Nucleic acid-binding proteins"/>
    <property type="match status" value="1"/>
</dbReference>
<dbReference type="HAMAP" id="MF_00403_B">
    <property type="entry name" value="Ribosomal_uS12_B"/>
    <property type="match status" value="1"/>
</dbReference>
<dbReference type="InterPro" id="IPR012340">
    <property type="entry name" value="NA-bd_OB-fold"/>
</dbReference>
<dbReference type="InterPro" id="IPR006032">
    <property type="entry name" value="Ribosomal_uS12"/>
</dbReference>
<dbReference type="InterPro" id="IPR005679">
    <property type="entry name" value="Ribosomal_uS12_bac"/>
</dbReference>
<dbReference type="NCBIfam" id="TIGR00981">
    <property type="entry name" value="rpsL_bact"/>
    <property type="match status" value="1"/>
</dbReference>
<dbReference type="PANTHER" id="PTHR11652">
    <property type="entry name" value="30S RIBOSOMAL PROTEIN S12 FAMILY MEMBER"/>
    <property type="match status" value="1"/>
</dbReference>
<dbReference type="Pfam" id="PF00164">
    <property type="entry name" value="Ribosom_S12_S23"/>
    <property type="match status" value="1"/>
</dbReference>
<dbReference type="PIRSF" id="PIRSF002133">
    <property type="entry name" value="Ribosomal_S12/S23"/>
    <property type="match status" value="1"/>
</dbReference>
<dbReference type="PRINTS" id="PR01034">
    <property type="entry name" value="RIBOSOMALS12"/>
</dbReference>
<dbReference type="SUPFAM" id="SSF50249">
    <property type="entry name" value="Nucleic acid-binding proteins"/>
    <property type="match status" value="1"/>
</dbReference>
<dbReference type="PROSITE" id="PS00055">
    <property type="entry name" value="RIBOSOMAL_S12"/>
    <property type="match status" value="1"/>
</dbReference>
<protein>
    <recommendedName>
        <fullName evidence="2">Small ribosomal subunit protein uS12</fullName>
    </recommendedName>
    <alternativeName>
        <fullName evidence="4">30S ribosomal protein S12</fullName>
    </alternativeName>
</protein>
<sequence>MSTVSQLIKKRRSSKTSKTKAPALSYGFNVLQKKNKHYSSPQKMGVCLRVTTMTPKKPNSALRKFARVRLSNGSEVTAYIPGVGHSLQEHSSVLVRGGRVKDLPGVRYHIVRGALDATGVANRKQGRSKYGSKLPKEKK</sequence>
<keyword id="KW-0488">Methylation</keyword>
<keyword id="KW-0687">Ribonucleoprotein</keyword>
<keyword id="KW-0689">Ribosomal protein</keyword>
<keyword id="KW-0694">RNA-binding</keyword>
<keyword id="KW-0699">rRNA-binding</keyword>
<keyword id="KW-0820">tRNA-binding</keyword>
<gene>
    <name evidence="2" type="primary">rpsL</name>
    <name type="ordered locus">AYWB_459</name>
</gene>
<name>RS12_AYWBP</name>
<proteinExistence type="inferred from homology"/>
<feature type="chain" id="PRO_0000238127" description="Small ribosomal subunit protein uS12">
    <location>
        <begin position="1"/>
        <end position="139"/>
    </location>
</feature>
<feature type="region of interest" description="Disordered" evidence="3">
    <location>
        <begin position="1"/>
        <end position="21"/>
    </location>
</feature>
<feature type="compositionally biased region" description="Basic residues" evidence="3">
    <location>
        <begin position="8"/>
        <end position="18"/>
    </location>
</feature>
<feature type="modified residue" description="3-methylthioaspartic acid" evidence="1">
    <location>
        <position position="102"/>
    </location>
</feature>
<reference key="1">
    <citation type="journal article" date="2006" name="J. Bacteriol.">
        <title>Living with genome instability: the adaptation of phytoplasmas to diverse environments of their insect and plant hosts.</title>
        <authorList>
            <person name="Bai X."/>
            <person name="Zhang J."/>
            <person name="Ewing A."/>
            <person name="Miller S.A."/>
            <person name="Jancso Radek A."/>
            <person name="Shevchenko D.V."/>
            <person name="Tsukerman K."/>
            <person name="Walunas T."/>
            <person name="Lapidus A."/>
            <person name="Campbell J.W."/>
            <person name="Hogenhout S.A."/>
        </authorList>
    </citation>
    <scope>NUCLEOTIDE SEQUENCE [LARGE SCALE GENOMIC DNA]</scope>
    <source>
        <strain>AYWB</strain>
    </source>
</reference>